<keyword id="KW-0687">Ribonucleoprotein</keyword>
<keyword id="KW-0689">Ribosomal protein</keyword>
<keyword id="KW-0694">RNA-binding</keyword>
<keyword id="KW-0699">rRNA-binding</keyword>
<keyword id="KW-0820">tRNA-binding</keyword>
<feature type="chain" id="PRO_1000142352" description="Large ribosomal subunit protein uL5">
    <location>
        <begin position="1"/>
        <end position="179"/>
    </location>
</feature>
<evidence type="ECO:0000255" key="1">
    <source>
        <dbReference type="HAMAP-Rule" id="MF_01333"/>
    </source>
</evidence>
<evidence type="ECO:0000305" key="2"/>
<gene>
    <name evidence="1" type="primary">rplE</name>
    <name type="ordered locus">BCG9842_B5183</name>
</gene>
<proteinExistence type="inferred from homology"/>
<sequence>MNRLKEKFQKEITPALVSKFNYKSVMEVPKIEKIVINTGVGDAVSNSKALDNAVEELTQIAGQKPVVTRAKKSIAGFRLREGMPIGAKVTLRGEQMYEFFDKLVSVSLPRVRDFRGVSKKSFDGRGNYTLGVKEQLIFPEIDYDKVSKVRGMDIVIVTTAKTDEEARELLTQFGMPFQK</sequence>
<comment type="function">
    <text evidence="1">This is one of the proteins that bind and probably mediate the attachment of the 5S RNA into the large ribosomal subunit, where it forms part of the central protuberance. In the 70S ribosome it contacts protein S13 of the 30S subunit (bridge B1b), connecting the 2 subunits; this bridge is implicated in subunit movement. Contacts the P site tRNA; the 5S rRNA and some of its associated proteins might help stabilize positioning of ribosome-bound tRNAs.</text>
</comment>
<comment type="subunit">
    <text evidence="1">Part of the 50S ribosomal subunit; part of the 5S rRNA/L5/L18/L25 subcomplex. Contacts the 5S rRNA and the P site tRNA. Forms a bridge to the 30S subunit in the 70S ribosome.</text>
</comment>
<comment type="similarity">
    <text evidence="1">Belongs to the universal ribosomal protein uL5 family.</text>
</comment>
<protein>
    <recommendedName>
        <fullName evidence="1">Large ribosomal subunit protein uL5</fullName>
    </recommendedName>
    <alternativeName>
        <fullName evidence="2">50S ribosomal protein L5</fullName>
    </alternativeName>
</protein>
<reference key="1">
    <citation type="submission" date="2008-10" db="EMBL/GenBank/DDBJ databases">
        <title>Genome sequence of Bacillus cereus G9842.</title>
        <authorList>
            <person name="Dodson R.J."/>
            <person name="Durkin A.S."/>
            <person name="Rosovitz M.J."/>
            <person name="Rasko D.A."/>
            <person name="Hoffmaster A."/>
            <person name="Ravel J."/>
            <person name="Sutton G."/>
        </authorList>
    </citation>
    <scope>NUCLEOTIDE SEQUENCE [LARGE SCALE GENOMIC DNA]</scope>
    <source>
        <strain>G9842</strain>
    </source>
</reference>
<organism>
    <name type="scientific">Bacillus cereus (strain G9842)</name>
    <dbReference type="NCBI Taxonomy" id="405531"/>
    <lineage>
        <taxon>Bacteria</taxon>
        <taxon>Bacillati</taxon>
        <taxon>Bacillota</taxon>
        <taxon>Bacilli</taxon>
        <taxon>Bacillales</taxon>
        <taxon>Bacillaceae</taxon>
        <taxon>Bacillus</taxon>
        <taxon>Bacillus cereus group</taxon>
    </lineage>
</organism>
<name>RL5_BACC2</name>
<dbReference type="EMBL" id="CP001186">
    <property type="protein sequence ID" value="ACK97955.1"/>
    <property type="molecule type" value="Genomic_DNA"/>
</dbReference>
<dbReference type="RefSeq" id="WP_001080829.1">
    <property type="nucleotide sequence ID" value="NC_011772.1"/>
</dbReference>
<dbReference type="SMR" id="B7IT31"/>
<dbReference type="GeneID" id="92798765"/>
<dbReference type="KEGG" id="bcg:BCG9842_B5183"/>
<dbReference type="HOGENOM" id="CLU_061015_2_1_9"/>
<dbReference type="Proteomes" id="UP000006744">
    <property type="component" value="Chromosome"/>
</dbReference>
<dbReference type="GO" id="GO:1990904">
    <property type="term" value="C:ribonucleoprotein complex"/>
    <property type="evidence" value="ECO:0007669"/>
    <property type="project" value="UniProtKB-KW"/>
</dbReference>
<dbReference type="GO" id="GO:0005840">
    <property type="term" value="C:ribosome"/>
    <property type="evidence" value="ECO:0007669"/>
    <property type="project" value="UniProtKB-KW"/>
</dbReference>
<dbReference type="GO" id="GO:0019843">
    <property type="term" value="F:rRNA binding"/>
    <property type="evidence" value="ECO:0007669"/>
    <property type="project" value="UniProtKB-UniRule"/>
</dbReference>
<dbReference type="GO" id="GO:0003735">
    <property type="term" value="F:structural constituent of ribosome"/>
    <property type="evidence" value="ECO:0007669"/>
    <property type="project" value="InterPro"/>
</dbReference>
<dbReference type="GO" id="GO:0000049">
    <property type="term" value="F:tRNA binding"/>
    <property type="evidence" value="ECO:0007669"/>
    <property type="project" value="UniProtKB-UniRule"/>
</dbReference>
<dbReference type="GO" id="GO:0006412">
    <property type="term" value="P:translation"/>
    <property type="evidence" value="ECO:0007669"/>
    <property type="project" value="UniProtKB-UniRule"/>
</dbReference>
<dbReference type="FunFam" id="3.30.1440.10:FF:000001">
    <property type="entry name" value="50S ribosomal protein L5"/>
    <property type="match status" value="1"/>
</dbReference>
<dbReference type="Gene3D" id="3.30.1440.10">
    <property type="match status" value="1"/>
</dbReference>
<dbReference type="HAMAP" id="MF_01333_B">
    <property type="entry name" value="Ribosomal_uL5_B"/>
    <property type="match status" value="1"/>
</dbReference>
<dbReference type="InterPro" id="IPR002132">
    <property type="entry name" value="Ribosomal_uL5"/>
</dbReference>
<dbReference type="InterPro" id="IPR020930">
    <property type="entry name" value="Ribosomal_uL5_bac-type"/>
</dbReference>
<dbReference type="InterPro" id="IPR031309">
    <property type="entry name" value="Ribosomal_uL5_C"/>
</dbReference>
<dbReference type="InterPro" id="IPR020929">
    <property type="entry name" value="Ribosomal_uL5_CS"/>
</dbReference>
<dbReference type="InterPro" id="IPR022803">
    <property type="entry name" value="Ribosomal_uL5_dom_sf"/>
</dbReference>
<dbReference type="InterPro" id="IPR031310">
    <property type="entry name" value="Ribosomal_uL5_N"/>
</dbReference>
<dbReference type="NCBIfam" id="NF000585">
    <property type="entry name" value="PRK00010.1"/>
    <property type="match status" value="1"/>
</dbReference>
<dbReference type="PANTHER" id="PTHR11994">
    <property type="entry name" value="60S RIBOSOMAL PROTEIN L11-RELATED"/>
    <property type="match status" value="1"/>
</dbReference>
<dbReference type="Pfam" id="PF00281">
    <property type="entry name" value="Ribosomal_L5"/>
    <property type="match status" value="1"/>
</dbReference>
<dbReference type="Pfam" id="PF00673">
    <property type="entry name" value="Ribosomal_L5_C"/>
    <property type="match status" value="1"/>
</dbReference>
<dbReference type="PIRSF" id="PIRSF002161">
    <property type="entry name" value="Ribosomal_L5"/>
    <property type="match status" value="1"/>
</dbReference>
<dbReference type="SUPFAM" id="SSF55282">
    <property type="entry name" value="RL5-like"/>
    <property type="match status" value="1"/>
</dbReference>
<dbReference type="PROSITE" id="PS00358">
    <property type="entry name" value="RIBOSOMAL_L5"/>
    <property type="match status" value="1"/>
</dbReference>
<accession>B7IT31</accession>